<protein>
    <recommendedName>
        <fullName evidence="1">Small ribosomal subunit protein uS15</fullName>
    </recommendedName>
    <alternativeName>
        <fullName evidence="3">30S ribosomal protein S15</fullName>
    </alternativeName>
</protein>
<gene>
    <name evidence="1" type="primary">rps15</name>
    <name type="ordered locus">MM_2066</name>
</gene>
<proteinExistence type="inferred from homology"/>
<reference key="1">
    <citation type="journal article" date="2002" name="J. Mol. Microbiol. Biotechnol.">
        <title>The genome of Methanosarcina mazei: evidence for lateral gene transfer between Bacteria and Archaea.</title>
        <authorList>
            <person name="Deppenmeier U."/>
            <person name="Johann A."/>
            <person name="Hartsch T."/>
            <person name="Merkl R."/>
            <person name="Schmitz R.A."/>
            <person name="Martinez-Arias R."/>
            <person name="Henne A."/>
            <person name="Wiezer A."/>
            <person name="Baeumer S."/>
            <person name="Jacobi C."/>
            <person name="Brueggemann H."/>
            <person name="Lienard T."/>
            <person name="Christmann A."/>
            <person name="Boemecke M."/>
            <person name="Steckel S."/>
            <person name="Bhattacharyya A."/>
            <person name="Lykidis A."/>
            <person name="Overbeek R."/>
            <person name="Klenk H.-P."/>
            <person name="Gunsalus R.P."/>
            <person name="Fritz H.-J."/>
            <person name="Gottschalk G."/>
        </authorList>
    </citation>
    <scope>NUCLEOTIDE SEQUENCE [LARGE SCALE GENOMIC DNA]</scope>
    <source>
        <strain>ATCC BAA-159 / DSM 3647 / Goe1 / Go1 / JCM 11833 / OCM 88</strain>
    </source>
</reference>
<feature type="chain" id="PRO_0000115611" description="Small ribosomal subunit protein uS15">
    <location>
        <begin position="1"/>
        <end position="152"/>
    </location>
</feature>
<feature type="region of interest" description="Disordered" evidence="2">
    <location>
        <begin position="1"/>
        <end position="24"/>
    </location>
</feature>
<feature type="compositionally biased region" description="Basic residues" evidence="2">
    <location>
        <begin position="1"/>
        <end position="11"/>
    </location>
</feature>
<comment type="subunit">
    <text evidence="1">Part of the 30S ribosomal subunit.</text>
</comment>
<comment type="similarity">
    <text evidence="1">Belongs to the universal ribosomal protein uS15 family.</text>
</comment>
<evidence type="ECO:0000255" key="1">
    <source>
        <dbReference type="HAMAP-Rule" id="MF_01343"/>
    </source>
</evidence>
<evidence type="ECO:0000256" key="2">
    <source>
        <dbReference type="SAM" id="MobiDB-lite"/>
    </source>
</evidence>
<evidence type="ECO:0000305" key="3"/>
<organism>
    <name type="scientific">Methanosarcina mazei (strain ATCC BAA-159 / DSM 3647 / Goe1 / Go1 / JCM 11833 / OCM 88)</name>
    <name type="common">Methanosarcina frisia</name>
    <dbReference type="NCBI Taxonomy" id="192952"/>
    <lineage>
        <taxon>Archaea</taxon>
        <taxon>Methanobacteriati</taxon>
        <taxon>Methanobacteriota</taxon>
        <taxon>Stenosarchaea group</taxon>
        <taxon>Methanomicrobia</taxon>
        <taxon>Methanosarcinales</taxon>
        <taxon>Methanosarcinaceae</taxon>
        <taxon>Methanosarcina</taxon>
    </lineage>
</organism>
<accession>Q8PVA5</accession>
<name>RS15_METMA</name>
<dbReference type="EMBL" id="AE008384">
    <property type="protein sequence ID" value="AAM31762.1"/>
    <property type="molecule type" value="Genomic_DNA"/>
</dbReference>
<dbReference type="RefSeq" id="WP_011033998.1">
    <property type="nucleotide sequence ID" value="NC_003901.1"/>
</dbReference>
<dbReference type="SMR" id="Q8PVA5"/>
<dbReference type="KEGG" id="mma:MM_2066"/>
<dbReference type="PATRIC" id="fig|192952.21.peg.2370"/>
<dbReference type="eggNOG" id="arCOG04185">
    <property type="taxonomic scope" value="Archaea"/>
</dbReference>
<dbReference type="HOGENOM" id="CLU_090139_2_0_2"/>
<dbReference type="Proteomes" id="UP000000595">
    <property type="component" value="Chromosome"/>
</dbReference>
<dbReference type="GO" id="GO:0022627">
    <property type="term" value="C:cytosolic small ribosomal subunit"/>
    <property type="evidence" value="ECO:0007669"/>
    <property type="project" value="TreeGrafter"/>
</dbReference>
<dbReference type="GO" id="GO:0070181">
    <property type="term" value="F:small ribosomal subunit rRNA binding"/>
    <property type="evidence" value="ECO:0007669"/>
    <property type="project" value="TreeGrafter"/>
</dbReference>
<dbReference type="GO" id="GO:0003735">
    <property type="term" value="F:structural constituent of ribosome"/>
    <property type="evidence" value="ECO:0007669"/>
    <property type="project" value="InterPro"/>
</dbReference>
<dbReference type="GO" id="GO:0006412">
    <property type="term" value="P:translation"/>
    <property type="evidence" value="ECO:0007669"/>
    <property type="project" value="UniProtKB-UniRule"/>
</dbReference>
<dbReference type="CDD" id="cd00353">
    <property type="entry name" value="Ribosomal_S15p_S13e"/>
    <property type="match status" value="1"/>
</dbReference>
<dbReference type="FunFam" id="1.10.287.10:FF:000003">
    <property type="entry name" value="40S ribosomal protein S13"/>
    <property type="match status" value="1"/>
</dbReference>
<dbReference type="Gene3D" id="4.10.860.130">
    <property type="match status" value="1"/>
</dbReference>
<dbReference type="Gene3D" id="1.10.287.10">
    <property type="entry name" value="S15/NS1, RNA-binding"/>
    <property type="match status" value="1"/>
</dbReference>
<dbReference type="HAMAP" id="MF_01343_A">
    <property type="entry name" value="Ribosomal_uS15_A"/>
    <property type="match status" value="1"/>
</dbReference>
<dbReference type="InterPro" id="IPR000589">
    <property type="entry name" value="Ribosomal_uS15"/>
</dbReference>
<dbReference type="InterPro" id="IPR023029">
    <property type="entry name" value="Ribosomal_uS15_arc_euk"/>
</dbReference>
<dbReference type="InterPro" id="IPR012606">
    <property type="entry name" value="Ribosomal_uS15_N"/>
</dbReference>
<dbReference type="InterPro" id="IPR009068">
    <property type="entry name" value="uS15_NS1_RNA-bd_sf"/>
</dbReference>
<dbReference type="NCBIfam" id="NF006331">
    <property type="entry name" value="PRK08561.1"/>
    <property type="match status" value="1"/>
</dbReference>
<dbReference type="PANTHER" id="PTHR11885">
    <property type="entry name" value="RIBOSOMAL PROTEIN S15P/S13E"/>
    <property type="match status" value="1"/>
</dbReference>
<dbReference type="PANTHER" id="PTHR11885:SF6">
    <property type="entry name" value="SMALL RIBOSOMAL SUBUNIT PROTEIN US15"/>
    <property type="match status" value="1"/>
</dbReference>
<dbReference type="Pfam" id="PF08069">
    <property type="entry name" value="Ribosomal_S13_N"/>
    <property type="match status" value="1"/>
</dbReference>
<dbReference type="Pfam" id="PF00312">
    <property type="entry name" value="Ribosomal_S15"/>
    <property type="match status" value="1"/>
</dbReference>
<dbReference type="SMART" id="SM01386">
    <property type="entry name" value="Ribosomal_S13_N"/>
    <property type="match status" value="1"/>
</dbReference>
<dbReference type="SMART" id="SM01387">
    <property type="entry name" value="Ribosomal_S15"/>
    <property type="match status" value="1"/>
</dbReference>
<dbReference type="SUPFAM" id="SSF47060">
    <property type="entry name" value="S15/NS1 RNA-binding domain"/>
    <property type="match status" value="1"/>
</dbReference>
<dbReference type="PROSITE" id="PS00362">
    <property type="entry name" value="RIBOSOMAL_S15"/>
    <property type="match status" value="1"/>
</dbReference>
<keyword id="KW-0687">Ribonucleoprotein</keyword>
<keyword id="KW-0689">Ribosomal protein</keyword>
<sequence length="152" mass="17502">MAKMHTKRKGKSSSTRPNRTEPPEWCKIGADEVTTITLDLWKQGVSTSEIGMILRDRYGVPDAKLVTGKKITTILKENNVAPNLPEDLTNLIVKALGLRKHLSTNKKDVHNKRALNLTESKIRRLVKYYKQEKVLPRDWFYKPETAEMMITR</sequence>